<name>LIGD_BACSU</name>
<proteinExistence type="evidence at transcript level"/>
<gene>
    <name type="primary">ligd</name>
    <name type="synonym">ykoU</name>
    <name type="ordered locus">BSU13400</name>
</gene>
<organism>
    <name type="scientific">Bacillus subtilis (strain 168)</name>
    <dbReference type="NCBI Taxonomy" id="224308"/>
    <lineage>
        <taxon>Bacteria</taxon>
        <taxon>Bacillati</taxon>
        <taxon>Bacillota</taxon>
        <taxon>Bacilli</taxon>
        <taxon>Bacillales</taxon>
        <taxon>Bacillaceae</taxon>
        <taxon>Bacillus</taxon>
    </lineage>
</organism>
<protein>
    <recommendedName>
        <fullName>Bifunctional non-homologous end joining protein LigD</fullName>
    </recommendedName>
    <alternativeName>
        <fullName>NHEJ DNA polymerase</fullName>
    </alternativeName>
    <domain>
        <recommendedName>
            <fullName>DNA ligase</fullName>
            <shortName>Lig</shortName>
            <ecNumber>6.5.1.1</ecNumber>
        </recommendedName>
        <alternativeName>
            <fullName>Polydeoxyribonucleotide synthase [ATP]</fullName>
        </alternativeName>
    </domain>
    <domain>
        <recommendedName>
            <fullName>DNA repair polymerase</fullName>
            <shortName>Pol</shortName>
        </recommendedName>
        <alternativeName>
            <fullName>Polymerase/primase</fullName>
        </alternativeName>
    </domain>
</protein>
<comment type="function">
    <text evidence="5">With Ku forms a non-homologous end joining (NHEJ) DNA repair enzyme, which repairs dsDNA breaks with reduced fidelity (Probable). Probably involved in DNA repair during spore germination.</text>
</comment>
<comment type="function">
    <text evidence="1">The preference of the polymerase domain for rNTPs over dNTPs may be advantageous in dormant cells, where the dNTP pool may be limiting.</text>
</comment>
<comment type="catalytic activity">
    <reaction>
        <text>ATP + (deoxyribonucleotide)n-3'-hydroxyl + 5'-phospho-(deoxyribonucleotide)m = (deoxyribonucleotide)n+m + AMP + diphosphate.</text>
        <dbReference type="EC" id="6.5.1.1"/>
    </reaction>
</comment>
<comment type="cofactor">
    <cofactor evidence="1">
        <name>Mn(2+)</name>
        <dbReference type="ChEBI" id="CHEBI:29035"/>
    </cofactor>
    <text evidence="1">Binds 3 Mn(2+); 2 Mn(2+) for polymerase/primase activity and 1 for ligase activity.</text>
</comment>
<comment type="subunit">
    <text evidence="1">Interacts with Ku.</text>
</comment>
<comment type="induction">
    <text evidence="3">Transcriptionally regulated by SpoVT and sigma-G factor.</text>
</comment>
<comment type="disruption phenotype">
    <text evidence="2 3 4">Stationary-phase cells lacking this gene are more sensitive to ionizing radiation (IR) than cells lacking Ku (YkoV); a double mutant is not more sensitive than the ku knockout. Spores lacking this gene are more sensitive to UV, IR, ultrahigh vacuum, and dry heat.</text>
</comment>
<comment type="miscellaneous">
    <text>LigD has variable architecture. In Bacillus lacks the 3'-phosphoesterase domain (PE) found in Mycobacteria and some Gammaproteobacteria.</text>
</comment>
<comment type="similarity">
    <text evidence="5">In the N-terminal section; belongs to the LigD polymerase family.</text>
</comment>
<comment type="similarity">
    <text evidence="5">In the C-terminal section; belongs to the ATP-dependent DNA ligase family.</text>
</comment>
<keyword id="KW-0067">ATP-binding</keyword>
<keyword id="KW-0227">DNA damage</keyword>
<keyword id="KW-0233">DNA recombination</keyword>
<keyword id="KW-0234">DNA repair</keyword>
<keyword id="KW-0238">DNA-binding</keyword>
<keyword id="KW-0239">DNA-directed DNA polymerase</keyword>
<keyword id="KW-0269">Exonuclease</keyword>
<keyword id="KW-0378">Hydrolase</keyword>
<keyword id="KW-0436">Ligase</keyword>
<keyword id="KW-0464">Manganese</keyword>
<keyword id="KW-0479">Metal-binding</keyword>
<keyword id="KW-0511">Multifunctional enzyme</keyword>
<keyword id="KW-0540">Nuclease</keyword>
<keyword id="KW-0547">Nucleotide-binding</keyword>
<keyword id="KW-0548">Nucleotidyltransferase</keyword>
<keyword id="KW-1185">Reference proteome</keyword>
<keyword id="KW-0749">Sporulation</keyword>
<keyword id="KW-0808">Transferase</keyword>
<evidence type="ECO:0000250" key="1"/>
<evidence type="ECO:0000269" key="2">
    <source>
    </source>
</evidence>
<evidence type="ECO:0000269" key="3">
    <source>
    </source>
</evidence>
<evidence type="ECO:0000269" key="4">
    <source>
    </source>
</evidence>
<evidence type="ECO:0000305" key="5"/>
<reference key="1">
    <citation type="journal article" date="1997" name="Nature">
        <title>The complete genome sequence of the Gram-positive bacterium Bacillus subtilis.</title>
        <authorList>
            <person name="Kunst F."/>
            <person name="Ogasawara N."/>
            <person name="Moszer I."/>
            <person name="Albertini A.M."/>
            <person name="Alloni G."/>
            <person name="Azevedo V."/>
            <person name="Bertero M.G."/>
            <person name="Bessieres P."/>
            <person name="Bolotin A."/>
            <person name="Borchert S."/>
            <person name="Borriss R."/>
            <person name="Boursier L."/>
            <person name="Brans A."/>
            <person name="Braun M."/>
            <person name="Brignell S.C."/>
            <person name="Bron S."/>
            <person name="Brouillet S."/>
            <person name="Bruschi C.V."/>
            <person name="Caldwell B."/>
            <person name="Capuano V."/>
            <person name="Carter N.M."/>
            <person name="Choi S.-K."/>
            <person name="Codani J.-J."/>
            <person name="Connerton I.F."/>
            <person name="Cummings N.J."/>
            <person name="Daniel R.A."/>
            <person name="Denizot F."/>
            <person name="Devine K.M."/>
            <person name="Duesterhoeft A."/>
            <person name="Ehrlich S.D."/>
            <person name="Emmerson P.T."/>
            <person name="Entian K.-D."/>
            <person name="Errington J."/>
            <person name="Fabret C."/>
            <person name="Ferrari E."/>
            <person name="Foulger D."/>
            <person name="Fritz C."/>
            <person name="Fujita M."/>
            <person name="Fujita Y."/>
            <person name="Fuma S."/>
            <person name="Galizzi A."/>
            <person name="Galleron N."/>
            <person name="Ghim S.-Y."/>
            <person name="Glaser P."/>
            <person name="Goffeau A."/>
            <person name="Golightly E.J."/>
            <person name="Grandi G."/>
            <person name="Guiseppi G."/>
            <person name="Guy B.J."/>
            <person name="Haga K."/>
            <person name="Haiech J."/>
            <person name="Harwood C.R."/>
            <person name="Henaut A."/>
            <person name="Hilbert H."/>
            <person name="Holsappel S."/>
            <person name="Hosono S."/>
            <person name="Hullo M.-F."/>
            <person name="Itaya M."/>
            <person name="Jones L.-M."/>
            <person name="Joris B."/>
            <person name="Karamata D."/>
            <person name="Kasahara Y."/>
            <person name="Klaerr-Blanchard M."/>
            <person name="Klein C."/>
            <person name="Kobayashi Y."/>
            <person name="Koetter P."/>
            <person name="Koningstein G."/>
            <person name="Krogh S."/>
            <person name="Kumano M."/>
            <person name="Kurita K."/>
            <person name="Lapidus A."/>
            <person name="Lardinois S."/>
            <person name="Lauber J."/>
            <person name="Lazarevic V."/>
            <person name="Lee S.-M."/>
            <person name="Levine A."/>
            <person name="Liu H."/>
            <person name="Masuda S."/>
            <person name="Mauel C."/>
            <person name="Medigue C."/>
            <person name="Medina N."/>
            <person name="Mellado R.P."/>
            <person name="Mizuno M."/>
            <person name="Moestl D."/>
            <person name="Nakai S."/>
            <person name="Noback M."/>
            <person name="Noone D."/>
            <person name="O'Reilly M."/>
            <person name="Ogawa K."/>
            <person name="Ogiwara A."/>
            <person name="Oudega B."/>
            <person name="Park S.-H."/>
            <person name="Parro V."/>
            <person name="Pohl T.M."/>
            <person name="Portetelle D."/>
            <person name="Porwollik S."/>
            <person name="Prescott A.M."/>
            <person name="Presecan E."/>
            <person name="Pujic P."/>
            <person name="Purnelle B."/>
            <person name="Rapoport G."/>
            <person name="Rey M."/>
            <person name="Reynolds S."/>
            <person name="Rieger M."/>
            <person name="Rivolta C."/>
            <person name="Rocha E."/>
            <person name="Roche B."/>
            <person name="Rose M."/>
            <person name="Sadaie Y."/>
            <person name="Sato T."/>
            <person name="Scanlan E."/>
            <person name="Schleich S."/>
            <person name="Schroeter R."/>
            <person name="Scoffone F."/>
            <person name="Sekiguchi J."/>
            <person name="Sekowska A."/>
            <person name="Seror S.J."/>
            <person name="Serror P."/>
            <person name="Shin B.-S."/>
            <person name="Soldo B."/>
            <person name="Sorokin A."/>
            <person name="Tacconi E."/>
            <person name="Takagi T."/>
            <person name="Takahashi H."/>
            <person name="Takemaru K."/>
            <person name="Takeuchi M."/>
            <person name="Tamakoshi A."/>
            <person name="Tanaka T."/>
            <person name="Terpstra P."/>
            <person name="Tognoni A."/>
            <person name="Tosato V."/>
            <person name="Uchiyama S."/>
            <person name="Vandenbol M."/>
            <person name="Vannier F."/>
            <person name="Vassarotti A."/>
            <person name="Viari A."/>
            <person name="Wambutt R."/>
            <person name="Wedler E."/>
            <person name="Wedler H."/>
            <person name="Weitzenegger T."/>
            <person name="Winters P."/>
            <person name="Wipat A."/>
            <person name="Yamamoto H."/>
            <person name="Yamane K."/>
            <person name="Yasumoto K."/>
            <person name="Yata K."/>
            <person name="Yoshida K."/>
            <person name="Yoshikawa H.-F."/>
            <person name="Zumstein E."/>
            <person name="Yoshikawa H."/>
            <person name="Danchin A."/>
        </authorList>
    </citation>
    <scope>NUCLEOTIDE SEQUENCE [LARGE SCALE GENOMIC DNA]</scope>
    <source>
        <strain>168</strain>
    </source>
</reference>
<reference key="2">
    <citation type="journal article" date="2002" name="Science">
        <title>Identification of a DNA nonhomologous end-joining complex in bacteria.</title>
        <authorList>
            <person name="Weller G.R."/>
            <person name="Kysela B."/>
            <person name="Roy R."/>
            <person name="Tonkin L.M."/>
            <person name="Scanlan E."/>
            <person name="Della M."/>
            <person name="Devine S.K."/>
            <person name="Day J.P."/>
            <person name="Wilkinson A."/>
            <person name="d'Adda di Fagagna F."/>
            <person name="Devine K.M."/>
            <person name="Bowater R.P."/>
            <person name="Jeggo P.A."/>
            <person name="Jackson S.P."/>
            <person name="Doherty A.J."/>
        </authorList>
    </citation>
    <scope>PROBABLE FUNCTION</scope>
    <scope>DISRUPTION PHENOTYPE</scope>
    <source>
        <strain>168</strain>
    </source>
</reference>
<reference key="3">
    <citation type="journal article" date="2006" name="J. Mol. Biol.">
        <title>The forespore line of gene expression in Bacillus subtilis.</title>
        <authorList>
            <person name="Wang S.T."/>
            <person name="Setlow B."/>
            <person name="Conlon E.M."/>
            <person name="Lyon J.L."/>
            <person name="Imamura D."/>
            <person name="Sato T."/>
            <person name="Setlow P."/>
            <person name="Losick R."/>
            <person name="Eichenberger P."/>
        </authorList>
    </citation>
    <scope>PROBABLE FUNCTION</scope>
    <scope>INDUCTION</scope>
    <scope>DISRUPTION PHENOTYPE</scope>
    <source>
        <strain>168 / PY79</strain>
    </source>
</reference>
<reference key="4">
    <citation type="journal article" date="2007" name="J. Bacteriol.">
        <title>Role of DNA repair by nonhomologous-end joining in Bacillus subtilis spore resistance to extreme dryness, mono- and polychromatic UV, and ionizing radiation.</title>
        <authorList>
            <person name="Moeller R."/>
            <person name="Stackebrandt E."/>
            <person name="Reitz G."/>
            <person name="Berger T."/>
            <person name="Rettberg P."/>
            <person name="Doherty A.J."/>
            <person name="Horneck G."/>
            <person name="Nicholson W.L."/>
        </authorList>
    </citation>
    <scope>PROBABLE FUNCTION</scope>
    <scope>DISRUPTION PHENOTYPE</scope>
    <source>
        <strain>168</strain>
    </source>
</reference>
<accession>O34398</accession>
<feature type="chain" id="PRO_0000389505" description="Bifunctional non-homologous end joining protein LigD">
    <location>
        <begin position="1"/>
        <end position="611"/>
    </location>
</feature>
<feature type="region of interest" description="Ligase domain (Lig)">
    <location>
        <begin position="5"/>
        <end position="310"/>
    </location>
</feature>
<feature type="region of interest" description="DNA repair polymerase domain (Pol)">
    <location>
        <begin position="325"/>
        <end position="564"/>
    </location>
</feature>
<feature type="active site" description="N6-AMP-lysine intermediate" evidence="1">
    <location>
        <position position="24"/>
    </location>
</feature>
<feature type="binding site" evidence="1">
    <location>
        <position position="22"/>
    </location>
    <ligand>
        <name>ATP</name>
        <dbReference type="ChEBI" id="CHEBI:30616"/>
    </ligand>
</feature>
<feature type="binding site" evidence="1">
    <location>
        <position position="26"/>
    </location>
    <ligand>
        <name>Mn(2+)</name>
        <dbReference type="ChEBI" id="CHEBI:29035"/>
        <label>1</label>
    </ligand>
</feature>
<feature type="binding site" evidence="1">
    <location>
        <position position="29"/>
    </location>
    <ligand>
        <name>ATP</name>
        <dbReference type="ChEBI" id="CHEBI:30616"/>
    </ligand>
</feature>
<feature type="binding site" evidence="1">
    <location>
        <position position="44"/>
    </location>
    <ligand>
        <name>ATP</name>
        <dbReference type="ChEBI" id="CHEBI:30616"/>
    </ligand>
</feature>
<feature type="binding site" evidence="1">
    <location>
        <position position="78"/>
    </location>
    <ligand>
        <name>ATP</name>
        <dbReference type="ChEBI" id="CHEBI:30616"/>
    </ligand>
</feature>
<feature type="binding site" evidence="1">
    <location>
        <position position="119"/>
    </location>
    <ligand>
        <name>ATP</name>
        <dbReference type="ChEBI" id="CHEBI:30616"/>
    </ligand>
</feature>
<feature type="binding site" evidence="1">
    <location>
        <position position="184"/>
    </location>
    <ligand>
        <name>Mn(2+)</name>
        <dbReference type="ChEBI" id="CHEBI:29035"/>
        <label>1</label>
    </ligand>
</feature>
<feature type="binding site" evidence="1">
    <location>
        <position position="200"/>
    </location>
    <ligand>
        <name>ATP</name>
        <dbReference type="ChEBI" id="CHEBI:30616"/>
    </ligand>
</feature>
<feature type="binding site" evidence="1">
    <location>
        <position position="206"/>
    </location>
    <ligand>
        <name>ATP</name>
        <dbReference type="ChEBI" id="CHEBI:30616"/>
    </ligand>
</feature>
<feature type="binding site" evidence="1">
    <location>
        <position position="439"/>
    </location>
    <ligand>
        <name>Mn(2+)</name>
        <dbReference type="ChEBI" id="CHEBI:29035"/>
        <label>2</label>
    </ligand>
</feature>
<feature type="binding site" evidence="1">
    <location>
        <position position="439"/>
    </location>
    <ligand>
        <name>Mn(2+)</name>
        <dbReference type="ChEBI" id="CHEBI:29035"/>
        <label>3</label>
    </ligand>
</feature>
<feature type="binding site" evidence="1">
    <location>
        <position position="441"/>
    </location>
    <ligand>
        <name>Mn(2+)</name>
        <dbReference type="ChEBI" id="CHEBI:29035"/>
        <label>2</label>
    </ligand>
</feature>
<feature type="binding site" evidence="1">
    <location>
        <position position="441"/>
    </location>
    <ligand>
        <name>Mn(2+)</name>
        <dbReference type="ChEBI" id="CHEBI:29035"/>
        <label>3</label>
    </ligand>
</feature>
<feature type="binding site" evidence="1">
    <location>
        <position position="530"/>
    </location>
    <ligand>
        <name>Mn(2+)</name>
        <dbReference type="ChEBI" id="CHEBI:29035"/>
        <label>3</label>
    </ligand>
</feature>
<dbReference type="EC" id="6.5.1.1"/>
<dbReference type="EMBL" id="AL009126">
    <property type="protein sequence ID" value="CAB13197.1"/>
    <property type="molecule type" value="Genomic_DNA"/>
</dbReference>
<dbReference type="PIR" id="G69860">
    <property type="entry name" value="G69860"/>
</dbReference>
<dbReference type="RefSeq" id="NP_389223.1">
    <property type="nucleotide sequence ID" value="NC_000964.3"/>
</dbReference>
<dbReference type="RefSeq" id="WP_010886495.1">
    <property type="nucleotide sequence ID" value="NZ_OZ025638.1"/>
</dbReference>
<dbReference type="SMR" id="O34398"/>
<dbReference type="FunCoup" id="O34398">
    <property type="interactions" value="18"/>
</dbReference>
<dbReference type="STRING" id="224308.BSU13400"/>
<dbReference type="PaxDb" id="224308-BSU13400"/>
<dbReference type="EnsemblBacteria" id="CAB13197">
    <property type="protein sequence ID" value="CAB13197"/>
    <property type="gene ID" value="BSU_13400"/>
</dbReference>
<dbReference type="GeneID" id="939372"/>
<dbReference type="KEGG" id="bsu:BSU13400"/>
<dbReference type="PATRIC" id="fig|224308.179.peg.1455"/>
<dbReference type="eggNOG" id="COG1793">
    <property type="taxonomic scope" value="Bacteria"/>
</dbReference>
<dbReference type="eggNOG" id="COG3285">
    <property type="taxonomic scope" value="Bacteria"/>
</dbReference>
<dbReference type="InParanoid" id="O34398"/>
<dbReference type="OrthoDB" id="9802472at2"/>
<dbReference type="PhylomeDB" id="O34398"/>
<dbReference type="BioCyc" id="BSUB:BSU13400-MONOMER"/>
<dbReference type="Proteomes" id="UP000001570">
    <property type="component" value="Chromosome"/>
</dbReference>
<dbReference type="GO" id="GO:0005524">
    <property type="term" value="F:ATP binding"/>
    <property type="evidence" value="ECO:0007669"/>
    <property type="project" value="UniProtKB-KW"/>
</dbReference>
<dbReference type="GO" id="GO:0003677">
    <property type="term" value="F:DNA binding"/>
    <property type="evidence" value="ECO:0007669"/>
    <property type="project" value="UniProtKB-KW"/>
</dbReference>
<dbReference type="GO" id="GO:0003910">
    <property type="term" value="F:DNA ligase (ATP) activity"/>
    <property type="evidence" value="ECO:0007669"/>
    <property type="project" value="UniProtKB-EC"/>
</dbReference>
<dbReference type="GO" id="GO:0003887">
    <property type="term" value="F:DNA-directed DNA polymerase activity"/>
    <property type="evidence" value="ECO:0007669"/>
    <property type="project" value="UniProtKB-KW"/>
</dbReference>
<dbReference type="GO" id="GO:0004527">
    <property type="term" value="F:exonuclease activity"/>
    <property type="evidence" value="ECO:0007669"/>
    <property type="project" value="UniProtKB-KW"/>
</dbReference>
<dbReference type="GO" id="GO:0046872">
    <property type="term" value="F:metal ion binding"/>
    <property type="evidence" value="ECO:0007669"/>
    <property type="project" value="UniProtKB-KW"/>
</dbReference>
<dbReference type="GO" id="GO:0006310">
    <property type="term" value="P:DNA recombination"/>
    <property type="evidence" value="ECO:0007669"/>
    <property type="project" value="UniProtKB-KW"/>
</dbReference>
<dbReference type="GO" id="GO:0006281">
    <property type="term" value="P:DNA repair"/>
    <property type="evidence" value="ECO:0007669"/>
    <property type="project" value="UniProtKB-KW"/>
</dbReference>
<dbReference type="GO" id="GO:0030435">
    <property type="term" value="P:sporulation resulting in formation of a cellular spore"/>
    <property type="evidence" value="ECO:0007669"/>
    <property type="project" value="UniProtKB-KW"/>
</dbReference>
<dbReference type="CDD" id="cd07906">
    <property type="entry name" value="Adenylation_DNA_ligase_LigD_LigC"/>
    <property type="match status" value="1"/>
</dbReference>
<dbReference type="CDD" id="cd04866">
    <property type="entry name" value="LigD_Pol_like_3"/>
    <property type="match status" value="1"/>
</dbReference>
<dbReference type="Gene3D" id="3.30.470.30">
    <property type="entry name" value="DNA ligase/mRNA capping enzyme"/>
    <property type="match status" value="1"/>
</dbReference>
<dbReference type="Gene3D" id="3.90.920.10">
    <property type="entry name" value="DNA primase, PRIM domain"/>
    <property type="match status" value="1"/>
</dbReference>
<dbReference type="InterPro" id="IPR012310">
    <property type="entry name" value="DNA_ligase_ATP-dep_cent"/>
</dbReference>
<dbReference type="InterPro" id="IPR014146">
    <property type="entry name" value="LigD_ligase_dom"/>
</dbReference>
<dbReference type="InterPro" id="IPR033652">
    <property type="entry name" value="LigD_Pol-like_3"/>
</dbReference>
<dbReference type="InterPro" id="IPR014145">
    <property type="entry name" value="LigD_pol_dom"/>
</dbReference>
<dbReference type="InterPro" id="IPR014143">
    <property type="entry name" value="NHEJ_ligase_prk"/>
</dbReference>
<dbReference type="InterPro" id="IPR052171">
    <property type="entry name" value="NHEJ_LigD"/>
</dbReference>
<dbReference type="NCBIfam" id="TIGR02778">
    <property type="entry name" value="ligD_pol"/>
    <property type="match status" value="1"/>
</dbReference>
<dbReference type="NCBIfam" id="TIGR02779">
    <property type="entry name" value="NHEJ_ligase_lig"/>
    <property type="match status" value="1"/>
</dbReference>
<dbReference type="NCBIfam" id="TIGR02776">
    <property type="entry name" value="NHEJ_ligase_prk"/>
    <property type="match status" value="1"/>
</dbReference>
<dbReference type="NCBIfam" id="NF007211">
    <property type="entry name" value="PRK09633.1"/>
    <property type="match status" value="1"/>
</dbReference>
<dbReference type="PANTHER" id="PTHR42705">
    <property type="entry name" value="BIFUNCTIONAL NON-HOMOLOGOUS END JOINING PROTEIN LIGD"/>
    <property type="match status" value="1"/>
</dbReference>
<dbReference type="PANTHER" id="PTHR42705:SF2">
    <property type="entry name" value="BIFUNCTIONAL NON-HOMOLOGOUS END JOINING PROTEIN LIGD"/>
    <property type="match status" value="1"/>
</dbReference>
<dbReference type="Pfam" id="PF01068">
    <property type="entry name" value="DNA_ligase_A_M"/>
    <property type="match status" value="1"/>
</dbReference>
<dbReference type="Pfam" id="PF21686">
    <property type="entry name" value="LigD_Prim-Pol"/>
    <property type="match status" value="1"/>
</dbReference>
<dbReference type="SUPFAM" id="SSF56091">
    <property type="entry name" value="DNA ligase/mRNA capping enzyme, catalytic domain"/>
    <property type="match status" value="1"/>
</dbReference>
<dbReference type="PROSITE" id="PS50160">
    <property type="entry name" value="DNA_LIGASE_A3"/>
    <property type="match status" value="1"/>
</dbReference>
<sequence length="611" mass="70204">MAFTMQPVLTSSPPIGAEWRYEVKYDGYRCILRIHSSGVTLTSRNGVELSSTFPEITQFAKTAFQHLEKELPLTLDGEIVCLVNPCRADFEHLQVRGRLKRPDKIQESANARPCCFLAFDLLERSGEDVTLLSYLDRKKSLRELISAAKLPASPDPYAKETIQSIPCYDHFDQLWEMVIKYDGEGIVAKKTNSKWLEKKRSSDWLKYKNFKQAYVCITGFNPNNGFLTVSVLKNGIMTPIASVSHGMRDEEKSAIREIMEQHGHQTPSGEFTLEPSICAAVQYLTILQGTLREVSFIGFEFQMDWTECTYAQVIRHSKPVHPKLQFTSLDKIIFEKNKKTKEDFIQYMIEVSDYLLPFLKNRAVTVIRYPHGSRSESFFQKNKPDYAPDFVQSFYDGSHEHIVCEDMSTLLWLCNQLALEFHVPFQTIKSRRPAEIVIDLDPPSRDDFLMAVQAANELKRLLDSFGITSYPKLSGNKGIQLYIPLSPEAFTYEETRQFTQLIAEYCTNAFPELFTTERLIKNRHCKLYLDYLQHAEGKTIICPYSTRGNELGTVAAPLYWHEVQSSLTPALFTIDTVIDRIKKQGCPFFDFYRNPQDEPLSAILHQLKKKS</sequence>